<gene>
    <name evidence="1" type="primary">bioB</name>
    <name type="ordered locus">EcE24377A_0838</name>
</gene>
<protein>
    <recommendedName>
        <fullName evidence="1">Biotin synthase</fullName>
        <ecNumber evidence="1">2.8.1.6</ecNumber>
    </recommendedName>
</protein>
<reference key="1">
    <citation type="journal article" date="2008" name="J. Bacteriol.">
        <title>The pangenome structure of Escherichia coli: comparative genomic analysis of E. coli commensal and pathogenic isolates.</title>
        <authorList>
            <person name="Rasko D.A."/>
            <person name="Rosovitz M.J."/>
            <person name="Myers G.S.A."/>
            <person name="Mongodin E.F."/>
            <person name="Fricke W.F."/>
            <person name="Gajer P."/>
            <person name="Crabtree J."/>
            <person name="Sebaihia M."/>
            <person name="Thomson N.R."/>
            <person name="Chaudhuri R."/>
            <person name="Henderson I.R."/>
            <person name="Sperandio V."/>
            <person name="Ravel J."/>
        </authorList>
    </citation>
    <scope>NUCLEOTIDE SEQUENCE [LARGE SCALE GENOMIC DNA]</scope>
    <source>
        <strain>E24377A / ETEC</strain>
    </source>
</reference>
<comment type="function">
    <text evidence="1">Catalyzes the conversion of dethiobiotin (DTB) to biotin by the insertion of a sulfur atom into dethiobiotin via a radical-based mechanism.</text>
</comment>
<comment type="catalytic activity">
    <reaction evidence="1">
        <text>(4R,5S)-dethiobiotin + (sulfur carrier)-SH + 2 reduced [2Fe-2S]-[ferredoxin] + 2 S-adenosyl-L-methionine = (sulfur carrier)-H + biotin + 2 5'-deoxyadenosine + 2 L-methionine + 2 oxidized [2Fe-2S]-[ferredoxin]</text>
        <dbReference type="Rhea" id="RHEA:22060"/>
        <dbReference type="Rhea" id="RHEA-COMP:10000"/>
        <dbReference type="Rhea" id="RHEA-COMP:10001"/>
        <dbReference type="Rhea" id="RHEA-COMP:14737"/>
        <dbReference type="Rhea" id="RHEA-COMP:14739"/>
        <dbReference type="ChEBI" id="CHEBI:17319"/>
        <dbReference type="ChEBI" id="CHEBI:29917"/>
        <dbReference type="ChEBI" id="CHEBI:33737"/>
        <dbReference type="ChEBI" id="CHEBI:33738"/>
        <dbReference type="ChEBI" id="CHEBI:57586"/>
        <dbReference type="ChEBI" id="CHEBI:57844"/>
        <dbReference type="ChEBI" id="CHEBI:59789"/>
        <dbReference type="ChEBI" id="CHEBI:64428"/>
        <dbReference type="ChEBI" id="CHEBI:149473"/>
        <dbReference type="EC" id="2.8.1.6"/>
    </reaction>
</comment>
<comment type="cofactor">
    <cofactor evidence="1">
        <name>[4Fe-4S] cluster</name>
        <dbReference type="ChEBI" id="CHEBI:49883"/>
    </cofactor>
    <text evidence="1">Binds 1 [4Fe-4S] cluster. The cluster is coordinated with 3 cysteines and an exchangeable S-adenosyl-L-methionine.</text>
</comment>
<comment type="cofactor">
    <cofactor evidence="1">
        <name>[2Fe-2S] cluster</name>
        <dbReference type="ChEBI" id="CHEBI:190135"/>
    </cofactor>
    <text evidence="1">Binds 1 [2Fe-2S] cluster. The cluster is coordinated with 3 cysteines and 1 arginine.</text>
</comment>
<comment type="pathway">
    <text evidence="1">Cofactor biosynthesis; biotin biosynthesis; biotin from 7,8-diaminononanoate: step 2/2.</text>
</comment>
<comment type="subunit">
    <text evidence="1">Homodimer.</text>
</comment>
<comment type="similarity">
    <text evidence="1">Belongs to the radical SAM superfamily. Biotin synthase family.</text>
</comment>
<sequence length="346" mass="38648">MAHRPRWTLSQVTELFEKPLLDLLFEAQQVHRQHFDPRQVQVSTLLSIKTGACPEDCKYCPQSSRYKTGLEAERLMEVEQVLESARKAKAAGSTRFCMGAAWKNPHERDMPYLEQMVQGVKAMGLEACMTLGTLSESQAQRLANAGLDYYNHNLDTSPEFYGNIITTRTYQERLDTLEKVRDAGIKVCSGGIVGLGETVKDRAGLLLQLANLPTPPESVPINMLVKVKGTPLADNDDVDAFDFIRTIAVARIMMPTSYVRLSAGREQMNEQTQAMCFMAGANSIFYGCKLLTTPNPEEDKDLQLFRKLGLNPQQTAVLAGDNEQQQRLEQALMTPDTDEYYNAAAL</sequence>
<name>BIOB_ECO24</name>
<keyword id="KW-0001">2Fe-2S</keyword>
<keyword id="KW-0004">4Fe-4S</keyword>
<keyword id="KW-0093">Biotin biosynthesis</keyword>
<keyword id="KW-0408">Iron</keyword>
<keyword id="KW-0411">Iron-sulfur</keyword>
<keyword id="KW-0479">Metal-binding</keyword>
<keyword id="KW-1185">Reference proteome</keyword>
<keyword id="KW-0949">S-adenosyl-L-methionine</keyword>
<keyword id="KW-0808">Transferase</keyword>
<dbReference type="EC" id="2.8.1.6" evidence="1"/>
<dbReference type="EMBL" id="CP000800">
    <property type="protein sequence ID" value="ABV19705.1"/>
    <property type="molecule type" value="Genomic_DNA"/>
</dbReference>
<dbReference type="RefSeq" id="WP_000951213.1">
    <property type="nucleotide sequence ID" value="NC_009801.1"/>
</dbReference>
<dbReference type="SMR" id="A7ZJI4"/>
<dbReference type="GeneID" id="93776655"/>
<dbReference type="KEGG" id="ecw:EcE24377A_0838"/>
<dbReference type="HOGENOM" id="CLU_033172_1_2_6"/>
<dbReference type="UniPathway" id="UPA00078">
    <property type="reaction ID" value="UER00162"/>
</dbReference>
<dbReference type="Proteomes" id="UP000001122">
    <property type="component" value="Chromosome"/>
</dbReference>
<dbReference type="GO" id="GO:0051537">
    <property type="term" value="F:2 iron, 2 sulfur cluster binding"/>
    <property type="evidence" value="ECO:0007669"/>
    <property type="project" value="UniProtKB-KW"/>
</dbReference>
<dbReference type="GO" id="GO:0051539">
    <property type="term" value="F:4 iron, 4 sulfur cluster binding"/>
    <property type="evidence" value="ECO:0007669"/>
    <property type="project" value="UniProtKB-KW"/>
</dbReference>
<dbReference type="GO" id="GO:0004076">
    <property type="term" value="F:biotin synthase activity"/>
    <property type="evidence" value="ECO:0007669"/>
    <property type="project" value="UniProtKB-UniRule"/>
</dbReference>
<dbReference type="GO" id="GO:0005506">
    <property type="term" value="F:iron ion binding"/>
    <property type="evidence" value="ECO:0007669"/>
    <property type="project" value="UniProtKB-UniRule"/>
</dbReference>
<dbReference type="GO" id="GO:0009102">
    <property type="term" value="P:biotin biosynthetic process"/>
    <property type="evidence" value="ECO:0007669"/>
    <property type="project" value="UniProtKB-UniRule"/>
</dbReference>
<dbReference type="CDD" id="cd01335">
    <property type="entry name" value="Radical_SAM"/>
    <property type="match status" value="1"/>
</dbReference>
<dbReference type="FunFam" id="3.20.20.70:FF:000011">
    <property type="entry name" value="Biotin synthase"/>
    <property type="match status" value="1"/>
</dbReference>
<dbReference type="Gene3D" id="3.20.20.70">
    <property type="entry name" value="Aldolase class I"/>
    <property type="match status" value="1"/>
</dbReference>
<dbReference type="HAMAP" id="MF_01694">
    <property type="entry name" value="BioB"/>
    <property type="match status" value="1"/>
</dbReference>
<dbReference type="InterPro" id="IPR013785">
    <property type="entry name" value="Aldolase_TIM"/>
</dbReference>
<dbReference type="InterPro" id="IPR010722">
    <property type="entry name" value="BATS_dom"/>
</dbReference>
<dbReference type="InterPro" id="IPR002684">
    <property type="entry name" value="Biotin_synth/BioAB"/>
</dbReference>
<dbReference type="InterPro" id="IPR024177">
    <property type="entry name" value="Biotin_synthase"/>
</dbReference>
<dbReference type="InterPro" id="IPR006638">
    <property type="entry name" value="Elp3/MiaA/NifB-like_rSAM"/>
</dbReference>
<dbReference type="InterPro" id="IPR007197">
    <property type="entry name" value="rSAM"/>
</dbReference>
<dbReference type="NCBIfam" id="TIGR00433">
    <property type="entry name" value="bioB"/>
    <property type="match status" value="1"/>
</dbReference>
<dbReference type="PANTHER" id="PTHR22976">
    <property type="entry name" value="BIOTIN SYNTHASE"/>
    <property type="match status" value="1"/>
</dbReference>
<dbReference type="PANTHER" id="PTHR22976:SF2">
    <property type="entry name" value="BIOTIN SYNTHASE, MITOCHONDRIAL"/>
    <property type="match status" value="1"/>
</dbReference>
<dbReference type="Pfam" id="PF06968">
    <property type="entry name" value="BATS"/>
    <property type="match status" value="1"/>
</dbReference>
<dbReference type="Pfam" id="PF04055">
    <property type="entry name" value="Radical_SAM"/>
    <property type="match status" value="1"/>
</dbReference>
<dbReference type="PIRSF" id="PIRSF001619">
    <property type="entry name" value="Biotin_synth"/>
    <property type="match status" value="1"/>
</dbReference>
<dbReference type="SFLD" id="SFLDG01060">
    <property type="entry name" value="BATS_domain_containing"/>
    <property type="match status" value="1"/>
</dbReference>
<dbReference type="SFLD" id="SFLDF00272">
    <property type="entry name" value="biotin_synthase"/>
    <property type="match status" value="1"/>
</dbReference>
<dbReference type="SMART" id="SM00876">
    <property type="entry name" value="BATS"/>
    <property type="match status" value="1"/>
</dbReference>
<dbReference type="SMART" id="SM00729">
    <property type="entry name" value="Elp3"/>
    <property type="match status" value="1"/>
</dbReference>
<dbReference type="SUPFAM" id="SSF102114">
    <property type="entry name" value="Radical SAM enzymes"/>
    <property type="match status" value="1"/>
</dbReference>
<dbReference type="PROSITE" id="PS51918">
    <property type="entry name" value="RADICAL_SAM"/>
    <property type="match status" value="1"/>
</dbReference>
<accession>A7ZJI4</accession>
<evidence type="ECO:0000255" key="1">
    <source>
        <dbReference type="HAMAP-Rule" id="MF_01694"/>
    </source>
</evidence>
<evidence type="ECO:0000255" key="2">
    <source>
        <dbReference type="PROSITE-ProRule" id="PRU01266"/>
    </source>
</evidence>
<proteinExistence type="inferred from homology"/>
<feature type="chain" id="PRO_0000381355" description="Biotin synthase">
    <location>
        <begin position="1"/>
        <end position="346"/>
    </location>
</feature>
<feature type="domain" description="Radical SAM core" evidence="2">
    <location>
        <begin position="38"/>
        <end position="256"/>
    </location>
</feature>
<feature type="binding site" evidence="1">
    <location>
        <position position="53"/>
    </location>
    <ligand>
        <name>[4Fe-4S] cluster</name>
        <dbReference type="ChEBI" id="CHEBI:49883"/>
        <note>4Fe-4S-S-AdoMet</note>
    </ligand>
</feature>
<feature type="binding site" evidence="1">
    <location>
        <position position="57"/>
    </location>
    <ligand>
        <name>[4Fe-4S] cluster</name>
        <dbReference type="ChEBI" id="CHEBI:49883"/>
        <note>4Fe-4S-S-AdoMet</note>
    </ligand>
</feature>
<feature type="binding site" evidence="1">
    <location>
        <position position="60"/>
    </location>
    <ligand>
        <name>[4Fe-4S] cluster</name>
        <dbReference type="ChEBI" id="CHEBI:49883"/>
        <note>4Fe-4S-S-AdoMet</note>
    </ligand>
</feature>
<feature type="binding site" evidence="1">
    <location>
        <position position="97"/>
    </location>
    <ligand>
        <name>[2Fe-2S] cluster</name>
        <dbReference type="ChEBI" id="CHEBI:190135"/>
    </ligand>
</feature>
<feature type="binding site" evidence="1">
    <location>
        <position position="128"/>
    </location>
    <ligand>
        <name>[2Fe-2S] cluster</name>
        <dbReference type="ChEBI" id="CHEBI:190135"/>
    </ligand>
</feature>
<feature type="binding site" evidence="1">
    <location>
        <position position="188"/>
    </location>
    <ligand>
        <name>[2Fe-2S] cluster</name>
        <dbReference type="ChEBI" id="CHEBI:190135"/>
    </ligand>
</feature>
<feature type="binding site" evidence="1">
    <location>
        <position position="260"/>
    </location>
    <ligand>
        <name>[2Fe-2S] cluster</name>
        <dbReference type="ChEBI" id="CHEBI:190135"/>
    </ligand>
</feature>
<organism>
    <name type="scientific">Escherichia coli O139:H28 (strain E24377A / ETEC)</name>
    <dbReference type="NCBI Taxonomy" id="331111"/>
    <lineage>
        <taxon>Bacteria</taxon>
        <taxon>Pseudomonadati</taxon>
        <taxon>Pseudomonadota</taxon>
        <taxon>Gammaproteobacteria</taxon>
        <taxon>Enterobacterales</taxon>
        <taxon>Enterobacteriaceae</taxon>
        <taxon>Escherichia</taxon>
    </lineage>
</organism>